<dbReference type="EC" id="7.1.1.-" evidence="1"/>
<dbReference type="EMBL" id="CU468135">
    <property type="protein sequence ID" value="CAO96256.1"/>
    <property type="molecule type" value="Genomic_DNA"/>
</dbReference>
<dbReference type="RefSeq" id="WP_012440952.1">
    <property type="nucleotide sequence ID" value="NC_010694.1"/>
</dbReference>
<dbReference type="SMR" id="B2VIV9"/>
<dbReference type="STRING" id="465817.ETA_12100"/>
<dbReference type="GeneID" id="92237551"/>
<dbReference type="KEGG" id="eta:ETA_12100"/>
<dbReference type="eggNOG" id="COG1005">
    <property type="taxonomic scope" value="Bacteria"/>
</dbReference>
<dbReference type="HOGENOM" id="CLU_015134_0_1_6"/>
<dbReference type="OrthoDB" id="9803734at2"/>
<dbReference type="Proteomes" id="UP000001726">
    <property type="component" value="Chromosome"/>
</dbReference>
<dbReference type="GO" id="GO:0005886">
    <property type="term" value="C:plasma membrane"/>
    <property type="evidence" value="ECO:0007669"/>
    <property type="project" value="UniProtKB-SubCell"/>
</dbReference>
<dbReference type="GO" id="GO:0003954">
    <property type="term" value="F:NADH dehydrogenase activity"/>
    <property type="evidence" value="ECO:0007669"/>
    <property type="project" value="TreeGrafter"/>
</dbReference>
<dbReference type="GO" id="GO:0016655">
    <property type="term" value="F:oxidoreductase activity, acting on NAD(P)H, quinone or similar compound as acceptor"/>
    <property type="evidence" value="ECO:0007669"/>
    <property type="project" value="UniProtKB-UniRule"/>
</dbReference>
<dbReference type="GO" id="GO:0048038">
    <property type="term" value="F:quinone binding"/>
    <property type="evidence" value="ECO:0007669"/>
    <property type="project" value="UniProtKB-KW"/>
</dbReference>
<dbReference type="GO" id="GO:0009060">
    <property type="term" value="P:aerobic respiration"/>
    <property type="evidence" value="ECO:0007669"/>
    <property type="project" value="TreeGrafter"/>
</dbReference>
<dbReference type="HAMAP" id="MF_01350">
    <property type="entry name" value="NDH1_NuoH"/>
    <property type="match status" value="1"/>
</dbReference>
<dbReference type="InterPro" id="IPR001694">
    <property type="entry name" value="NADH_UbQ_OxRdtase_su1/FPO"/>
</dbReference>
<dbReference type="InterPro" id="IPR018086">
    <property type="entry name" value="NADH_UbQ_OxRdtase_su1_CS"/>
</dbReference>
<dbReference type="NCBIfam" id="NF004740">
    <property type="entry name" value="PRK06076.1-1"/>
    <property type="match status" value="1"/>
</dbReference>
<dbReference type="NCBIfam" id="NF004741">
    <property type="entry name" value="PRK06076.1-2"/>
    <property type="match status" value="1"/>
</dbReference>
<dbReference type="PANTHER" id="PTHR11432">
    <property type="entry name" value="NADH DEHYDROGENASE SUBUNIT 1"/>
    <property type="match status" value="1"/>
</dbReference>
<dbReference type="PANTHER" id="PTHR11432:SF3">
    <property type="entry name" value="NADH-UBIQUINONE OXIDOREDUCTASE CHAIN 1"/>
    <property type="match status" value="1"/>
</dbReference>
<dbReference type="Pfam" id="PF00146">
    <property type="entry name" value="NADHdh"/>
    <property type="match status" value="1"/>
</dbReference>
<dbReference type="PROSITE" id="PS00667">
    <property type="entry name" value="COMPLEX1_ND1_1"/>
    <property type="match status" value="1"/>
</dbReference>
<dbReference type="PROSITE" id="PS00668">
    <property type="entry name" value="COMPLEX1_ND1_2"/>
    <property type="match status" value="1"/>
</dbReference>
<reference key="1">
    <citation type="journal article" date="2008" name="Environ. Microbiol.">
        <title>The genome of Erwinia tasmaniensis strain Et1/99, a non-pathogenic bacterium in the genus Erwinia.</title>
        <authorList>
            <person name="Kube M."/>
            <person name="Migdoll A.M."/>
            <person name="Mueller I."/>
            <person name="Kuhl H."/>
            <person name="Beck A."/>
            <person name="Reinhardt R."/>
            <person name="Geider K."/>
        </authorList>
    </citation>
    <scope>NUCLEOTIDE SEQUENCE [LARGE SCALE GENOMIC DNA]</scope>
    <source>
        <strain>DSM 17950 / CFBP 7177 / CIP 109463 / NCPPB 4357 / Et1/99</strain>
    </source>
</reference>
<protein>
    <recommendedName>
        <fullName evidence="1">NADH-quinone oxidoreductase subunit H</fullName>
        <ecNumber evidence="1">7.1.1.-</ecNumber>
    </recommendedName>
    <alternativeName>
        <fullName evidence="1">NADH dehydrogenase I subunit H</fullName>
    </alternativeName>
    <alternativeName>
        <fullName evidence="1">NDH-1 subunit H</fullName>
    </alternativeName>
</protein>
<comment type="function">
    <text evidence="1">NDH-1 shuttles electrons from NADH, via FMN and iron-sulfur (Fe-S) centers, to quinones in the respiratory chain. The immediate electron acceptor for the enzyme in this species is believed to be ubiquinone. Couples the redox reaction to proton translocation (for every two electrons transferred, four hydrogen ions are translocated across the cytoplasmic membrane), and thus conserves the redox energy in a proton gradient. This subunit may bind ubiquinone.</text>
</comment>
<comment type="catalytic activity">
    <reaction evidence="1">
        <text>a quinone + NADH + 5 H(+)(in) = a quinol + NAD(+) + 4 H(+)(out)</text>
        <dbReference type="Rhea" id="RHEA:57888"/>
        <dbReference type="ChEBI" id="CHEBI:15378"/>
        <dbReference type="ChEBI" id="CHEBI:24646"/>
        <dbReference type="ChEBI" id="CHEBI:57540"/>
        <dbReference type="ChEBI" id="CHEBI:57945"/>
        <dbReference type="ChEBI" id="CHEBI:132124"/>
    </reaction>
</comment>
<comment type="subunit">
    <text evidence="1">NDH-1 is composed of 13 different subunits. Subunits NuoA, H, J, K, L, M, N constitute the membrane sector of the complex.</text>
</comment>
<comment type="subcellular location">
    <subcellularLocation>
        <location evidence="1">Cell inner membrane</location>
        <topology evidence="1">Multi-pass membrane protein</topology>
    </subcellularLocation>
</comment>
<comment type="similarity">
    <text evidence="1">Belongs to the complex I subunit 1 family.</text>
</comment>
<organism>
    <name type="scientific">Erwinia tasmaniensis (strain DSM 17950 / CFBP 7177 / CIP 109463 / NCPPB 4357 / Et1/99)</name>
    <dbReference type="NCBI Taxonomy" id="465817"/>
    <lineage>
        <taxon>Bacteria</taxon>
        <taxon>Pseudomonadati</taxon>
        <taxon>Pseudomonadota</taxon>
        <taxon>Gammaproteobacteria</taxon>
        <taxon>Enterobacterales</taxon>
        <taxon>Erwiniaceae</taxon>
        <taxon>Erwinia</taxon>
    </lineage>
</organism>
<accession>B2VIV9</accession>
<feature type="chain" id="PRO_1000143598" description="NADH-quinone oxidoreductase subunit H">
    <location>
        <begin position="1"/>
        <end position="325"/>
    </location>
</feature>
<feature type="transmembrane region" description="Helical" evidence="1">
    <location>
        <begin position="11"/>
        <end position="31"/>
    </location>
</feature>
<feature type="transmembrane region" description="Helical" evidence="1">
    <location>
        <begin position="81"/>
        <end position="101"/>
    </location>
</feature>
<feature type="transmembrane region" description="Helical" evidence="1">
    <location>
        <begin position="114"/>
        <end position="134"/>
    </location>
</feature>
<feature type="transmembrane region" description="Helical" evidence="1">
    <location>
        <begin position="154"/>
        <end position="174"/>
    </location>
</feature>
<feature type="transmembrane region" description="Helical" evidence="1">
    <location>
        <begin position="186"/>
        <end position="206"/>
    </location>
</feature>
<feature type="transmembrane region" description="Helical" evidence="1">
    <location>
        <begin position="237"/>
        <end position="257"/>
    </location>
</feature>
<feature type="transmembrane region" description="Helical" evidence="1">
    <location>
        <begin position="265"/>
        <end position="285"/>
    </location>
</feature>
<feature type="transmembrane region" description="Helical" evidence="1">
    <location>
        <begin position="304"/>
        <end position="324"/>
    </location>
</feature>
<evidence type="ECO:0000255" key="1">
    <source>
        <dbReference type="HAMAP-Rule" id="MF_01350"/>
    </source>
</evidence>
<sequence length="325" mass="36007">MSWLTPEVIDVIIAVVKALVILFVVVGCGAFMSFGERRLLGLFQNRYGPNRVGWGGSLQLVADMIKMFFKEDWIPPFTDRVIFTLAPMIAFTSLLLAMAIVPVTSTWMGADLNIGLLFFLMMAGLAVYAVLFAGWSSNNKYSLLGAMRASAQTLSYEVFLGLSLMGVVAQAGSFNMVDIVNSQAHLWNVIPQFLGFLTFCIAGVAVCHRHPFDQPEAEQELADGYHIEYAGMKFGLFFVGEYVGIVTVSALIVTLFFGGWQGPWLPPVIWFALKTAFFMMMFILIRAALPRPRYDQVMSFGWKVCLPLTLLNLLATAAVILYTAQ</sequence>
<name>NUOH_ERWT9</name>
<keyword id="KW-0997">Cell inner membrane</keyword>
<keyword id="KW-1003">Cell membrane</keyword>
<keyword id="KW-0472">Membrane</keyword>
<keyword id="KW-0520">NAD</keyword>
<keyword id="KW-0874">Quinone</keyword>
<keyword id="KW-1185">Reference proteome</keyword>
<keyword id="KW-1278">Translocase</keyword>
<keyword id="KW-0812">Transmembrane</keyword>
<keyword id="KW-1133">Transmembrane helix</keyword>
<keyword id="KW-0830">Ubiquinone</keyword>
<proteinExistence type="inferred from homology"/>
<gene>
    <name evidence="1" type="primary">nuoH</name>
    <name type="ordered locus">ETA_12100</name>
</gene>